<protein>
    <recommendedName>
        <fullName evidence="1">Aspartate carbamoyltransferase catalytic subunit</fullName>
        <ecNumber evidence="1">2.1.3.2</ecNumber>
    </recommendedName>
    <alternativeName>
        <fullName evidence="1">Aspartate transcarbamylase</fullName>
        <shortName evidence="1">ATCase</shortName>
    </alternativeName>
</protein>
<accession>A8FMF1</accession>
<feature type="chain" id="PRO_1000070897" description="Aspartate carbamoyltransferase catalytic subunit">
    <location>
        <begin position="1"/>
        <end position="295"/>
    </location>
</feature>
<feature type="binding site" evidence="1">
    <location>
        <position position="49"/>
    </location>
    <ligand>
        <name>carbamoyl phosphate</name>
        <dbReference type="ChEBI" id="CHEBI:58228"/>
    </ligand>
</feature>
<feature type="binding site" evidence="1">
    <location>
        <position position="50"/>
    </location>
    <ligand>
        <name>carbamoyl phosphate</name>
        <dbReference type="ChEBI" id="CHEBI:58228"/>
    </ligand>
</feature>
<feature type="binding site" evidence="1">
    <location>
        <position position="77"/>
    </location>
    <ligand>
        <name>L-aspartate</name>
        <dbReference type="ChEBI" id="CHEBI:29991"/>
    </ligand>
</feature>
<feature type="binding site" evidence="1">
    <location>
        <position position="99"/>
    </location>
    <ligand>
        <name>carbamoyl phosphate</name>
        <dbReference type="ChEBI" id="CHEBI:58228"/>
    </ligand>
</feature>
<feature type="binding site" evidence="1">
    <location>
        <position position="127"/>
    </location>
    <ligand>
        <name>carbamoyl phosphate</name>
        <dbReference type="ChEBI" id="CHEBI:58228"/>
    </ligand>
</feature>
<feature type="binding site" evidence="1">
    <location>
        <position position="130"/>
    </location>
    <ligand>
        <name>carbamoyl phosphate</name>
        <dbReference type="ChEBI" id="CHEBI:58228"/>
    </ligand>
</feature>
<feature type="binding site" evidence="1">
    <location>
        <position position="161"/>
    </location>
    <ligand>
        <name>L-aspartate</name>
        <dbReference type="ChEBI" id="CHEBI:29991"/>
    </ligand>
</feature>
<feature type="binding site" evidence="1">
    <location>
        <position position="212"/>
    </location>
    <ligand>
        <name>L-aspartate</name>
        <dbReference type="ChEBI" id="CHEBI:29991"/>
    </ligand>
</feature>
<feature type="binding site" evidence="1">
    <location>
        <position position="251"/>
    </location>
    <ligand>
        <name>carbamoyl phosphate</name>
        <dbReference type="ChEBI" id="CHEBI:58228"/>
    </ligand>
</feature>
<feature type="binding site" evidence="1">
    <location>
        <position position="252"/>
    </location>
    <ligand>
        <name>carbamoyl phosphate</name>
        <dbReference type="ChEBI" id="CHEBI:58228"/>
    </ligand>
</feature>
<proteinExistence type="inferred from homology"/>
<name>PYRB_CAMJ8</name>
<organism>
    <name type="scientific">Campylobacter jejuni subsp. jejuni serotype O:6 (strain 81116 / NCTC 11828)</name>
    <dbReference type="NCBI Taxonomy" id="407148"/>
    <lineage>
        <taxon>Bacteria</taxon>
        <taxon>Pseudomonadati</taxon>
        <taxon>Campylobacterota</taxon>
        <taxon>Epsilonproteobacteria</taxon>
        <taxon>Campylobacterales</taxon>
        <taxon>Campylobacteraceae</taxon>
        <taxon>Campylobacter</taxon>
    </lineage>
</organism>
<reference key="1">
    <citation type="journal article" date="2007" name="J. Bacteriol.">
        <title>The complete genome sequence of Campylobacter jejuni strain 81116 (NCTC11828).</title>
        <authorList>
            <person name="Pearson B.M."/>
            <person name="Gaskin D.J.H."/>
            <person name="Segers R.P.A.M."/>
            <person name="Wells J.M."/>
            <person name="Nuijten P.J.M."/>
            <person name="van Vliet A.H.M."/>
        </authorList>
    </citation>
    <scope>NUCLEOTIDE SEQUENCE [LARGE SCALE GENOMIC DNA]</scope>
    <source>
        <strain>81116 / NCTC 11828</strain>
    </source>
</reference>
<gene>
    <name evidence="1" type="primary">pyrB</name>
    <name type="ordered locus">C8J_1039</name>
</gene>
<comment type="function">
    <text evidence="1">Catalyzes the condensation of carbamoyl phosphate and aspartate to form carbamoyl aspartate and inorganic phosphate, the committed step in the de novo pyrimidine nucleotide biosynthesis pathway.</text>
</comment>
<comment type="catalytic activity">
    <reaction evidence="1">
        <text>carbamoyl phosphate + L-aspartate = N-carbamoyl-L-aspartate + phosphate + H(+)</text>
        <dbReference type="Rhea" id="RHEA:20013"/>
        <dbReference type="ChEBI" id="CHEBI:15378"/>
        <dbReference type="ChEBI" id="CHEBI:29991"/>
        <dbReference type="ChEBI" id="CHEBI:32814"/>
        <dbReference type="ChEBI" id="CHEBI:43474"/>
        <dbReference type="ChEBI" id="CHEBI:58228"/>
        <dbReference type="EC" id="2.1.3.2"/>
    </reaction>
</comment>
<comment type="pathway">
    <text evidence="1">Pyrimidine metabolism; UMP biosynthesis via de novo pathway; (S)-dihydroorotate from bicarbonate: step 2/3.</text>
</comment>
<comment type="subunit">
    <text evidence="1">Heterododecamer (2C3:3R2) of six catalytic PyrB chains organized as two trimers (C3), and six regulatory PyrI chains organized as three dimers (R2).</text>
</comment>
<comment type="similarity">
    <text evidence="1">Belongs to the aspartate/ornithine carbamoyltransferase superfamily. ATCase family.</text>
</comment>
<keyword id="KW-0665">Pyrimidine biosynthesis</keyword>
<keyword id="KW-0808">Transferase</keyword>
<dbReference type="EC" id="2.1.3.2" evidence="1"/>
<dbReference type="EMBL" id="CP000814">
    <property type="protein sequence ID" value="ABV52638.1"/>
    <property type="molecule type" value="Genomic_DNA"/>
</dbReference>
<dbReference type="RefSeq" id="WP_002866119.1">
    <property type="nucleotide sequence ID" value="NC_009839.1"/>
</dbReference>
<dbReference type="SMR" id="A8FMF1"/>
<dbReference type="KEGG" id="cju:C8J_1039"/>
<dbReference type="HOGENOM" id="CLU_043846_2_0_7"/>
<dbReference type="UniPathway" id="UPA00070">
    <property type="reaction ID" value="UER00116"/>
</dbReference>
<dbReference type="GO" id="GO:0005829">
    <property type="term" value="C:cytosol"/>
    <property type="evidence" value="ECO:0007669"/>
    <property type="project" value="TreeGrafter"/>
</dbReference>
<dbReference type="GO" id="GO:0016597">
    <property type="term" value="F:amino acid binding"/>
    <property type="evidence" value="ECO:0007669"/>
    <property type="project" value="InterPro"/>
</dbReference>
<dbReference type="GO" id="GO:0004070">
    <property type="term" value="F:aspartate carbamoyltransferase activity"/>
    <property type="evidence" value="ECO:0007669"/>
    <property type="project" value="UniProtKB-UniRule"/>
</dbReference>
<dbReference type="GO" id="GO:0006207">
    <property type="term" value="P:'de novo' pyrimidine nucleobase biosynthetic process"/>
    <property type="evidence" value="ECO:0007669"/>
    <property type="project" value="InterPro"/>
</dbReference>
<dbReference type="GO" id="GO:0044205">
    <property type="term" value="P:'de novo' UMP biosynthetic process"/>
    <property type="evidence" value="ECO:0007669"/>
    <property type="project" value="UniProtKB-UniRule"/>
</dbReference>
<dbReference type="GO" id="GO:0006520">
    <property type="term" value="P:amino acid metabolic process"/>
    <property type="evidence" value="ECO:0007669"/>
    <property type="project" value="InterPro"/>
</dbReference>
<dbReference type="Gene3D" id="3.40.50.1370">
    <property type="entry name" value="Aspartate/ornithine carbamoyltransferase"/>
    <property type="match status" value="2"/>
</dbReference>
<dbReference type="HAMAP" id="MF_00001">
    <property type="entry name" value="Asp_carb_tr"/>
    <property type="match status" value="1"/>
</dbReference>
<dbReference type="InterPro" id="IPR006132">
    <property type="entry name" value="Asp/Orn_carbamoyltranf_P-bd"/>
</dbReference>
<dbReference type="InterPro" id="IPR006130">
    <property type="entry name" value="Asp/Orn_carbamoylTrfase"/>
</dbReference>
<dbReference type="InterPro" id="IPR036901">
    <property type="entry name" value="Asp/Orn_carbamoylTrfase_sf"/>
</dbReference>
<dbReference type="InterPro" id="IPR002082">
    <property type="entry name" value="Asp_carbamoyltransf"/>
</dbReference>
<dbReference type="InterPro" id="IPR006131">
    <property type="entry name" value="Asp_carbamoyltransf_Asp/Orn-bd"/>
</dbReference>
<dbReference type="NCBIfam" id="TIGR00670">
    <property type="entry name" value="asp_carb_tr"/>
    <property type="match status" value="1"/>
</dbReference>
<dbReference type="NCBIfam" id="NF002032">
    <property type="entry name" value="PRK00856.1"/>
    <property type="match status" value="1"/>
</dbReference>
<dbReference type="PANTHER" id="PTHR45753:SF6">
    <property type="entry name" value="ASPARTATE CARBAMOYLTRANSFERASE"/>
    <property type="match status" value="1"/>
</dbReference>
<dbReference type="PANTHER" id="PTHR45753">
    <property type="entry name" value="ORNITHINE CARBAMOYLTRANSFERASE, MITOCHONDRIAL"/>
    <property type="match status" value="1"/>
</dbReference>
<dbReference type="Pfam" id="PF00185">
    <property type="entry name" value="OTCace"/>
    <property type="match status" value="1"/>
</dbReference>
<dbReference type="Pfam" id="PF02729">
    <property type="entry name" value="OTCace_N"/>
    <property type="match status" value="1"/>
</dbReference>
<dbReference type="PRINTS" id="PR00100">
    <property type="entry name" value="AOTCASE"/>
</dbReference>
<dbReference type="PRINTS" id="PR00101">
    <property type="entry name" value="ATCASE"/>
</dbReference>
<dbReference type="SUPFAM" id="SSF53671">
    <property type="entry name" value="Aspartate/ornithine carbamoyltransferase"/>
    <property type="match status" value="1"/>
</dbReference>
<dbReference type="PROSITE" id="PS00097">
    <property type="entry name" value="CARBAMOYLTRANSFERASE"/>
    <property type="match status" value="1"/>
</dbReference>
<sequence length="295" mass="33116">MRHLITTKDFNKVEIMELFKEASDFLDEKPRTFLKGKSITTIFFENSTRTLSSFESAARRLGARVLRLDVSRSSSSKGETLYDTAANLDAMSPNAIVVRHANSGVPLILAKHIHCPVVNGGDGKHAHPTQALLDLFTIYNHFQGDVEGKKICIVGDIKNSRVAASNIELLSRFNLDITLVAPPHFMPNTHLKKHYKLDENIIANSDIIMSLRTQTERHNKTVYASLKDYANDFCIQKSLVKDKKLILLHPGPVNRNIDISDEMMSDERTLVLKQVKNGVAIRMAVLKKLILENEG</sequence>
<evidence type="ECO:0000255" key="1">
    <source>
        <dbReference type="HAMAP-Rule" id="MF_00001"/>
    </source>
</evidence>